<organism>
    <name type="scientific">Arabidopsis thaliana</name>
    <name type="common">Mouse-ear cress</name>
    <dbReference type="NCBI Taxonomy" id="3702"/>
    <lineage>
        <taxon>Eukaryota</taxon>
        <taxon>Viridiplantae</taxon>
        <taxon>Streptophyta</taxon>
        <taxon>Embryophyta</taxon>
        <taxon>Tracheophyta</taxon>
        <taxon>Spermatophyta</taxon>
        <taxon>Magnoliopsida</taxon>
        <taxon>eudicotyledons</taxon>
        <taxon>Gunneridae</taxon>
        <taxon>Pentapetalae</taxon>
        <taxon>rosids</taxon>
        <taxon>malvids</taxon>
        <taxon>Brassicales</taxon>
        <taxon>Brassicaceae</taxon>
        <taxon>Camelineae</taxon>
        <taxon>Arabidopsis</taxon>
    </lineage>
</organism>
<feature type="chain" id="PRO_0000431960" description="RNA-binding protein BRN1">
    <location>
        <begin position="1"/>
        <end position="441"/>
    </location>
</feature>
<feature type="domain" description="RRM 1" evidence="1">
    <location>
        <begin position="18"/>
        <end position="99"/>
    </location>
</feature>
<feature type="domain" description="RRM 2" evidence="1">
    <location>
        <begin position="106"/>
        <end position="186"/>
    </location>
</feature>
<feature type="domain" description="RRM 3" evidence="1">
    <location>
        <begin position="349"/>
        <end position="427"/>
    </location>
</feature>
<feature type="region of interest" description="Disordered" evidence="2">
    <location>
        <begin position="258"/>
        <end position="282"/>
    </location>
</feature>
<feature type="compositionally biased region" description="Polar residues" evidence="2">
    <location>
        <begin position="258"/>
        <end position="273"/>
    </location>
</feature>
<feature type="splice variant" id="VSP_057470" description="In isoform 2.">
    <original>FVSYDSQAAAQNAIDMMNGRHLGGKKLKVQLKRDSNNGQPSSNPSLIS</original>
    <variation>KLSFDLVFPLLKLVHCEGRKKAFFCCCCWLQVLLAMTHKPRRRTLLT</variation>
    <location>
        <begin position="394"/>
        <end position="441"/>
    </location>
</feature>
<feature type="sequence conflict" description="In Ref. 3; AAL38737 and 2; AEE82273." evidence="8" ref="3 2">
    <location>
        <position position="234"/>
    </location>
</feature>
<gene>
    <name evidence="7" type="primary">BRN1</name>
    <name evidence="6" type="synonym">RBP-DR1</name>
    <name evidence="9" type="ordered locus">At4g03110</name>
    <name evidence="11" type="ORF">F4C21.3</name>
    <name evidence="10" type="ORF">T4I9.1</name>
</gene>
<proteinExistence type="evidence at transcript level"/>
<name>BRN1L_ARATH</name>
<reference key="1">
    <citation type="journal article" date="1999" name="Nature">
        <title>Sequence and analysis of chromosome 4 of the plant Arabidopsis thaliana.</title>
        <authorList>
            <person name="Mayer K.F.X."/>
            <person name="Schueller C."/>
            <person name="Wambutt R."/>
            <person name="Murphy G."/>
            <person name="Volckaert G."/>
            <person name="Pohl T."/>
            <person name="Duesterhoeft A."/>
            <person name="Stiekema W."/>
            <person name="Entian K.-D."/>
            <person name="Terryn N."/>
            <person name="Harris B."/>
            <person name="Ansorge W."/>
            <person name="Brandt P."/>
            <person name="Grivell L.A."/>
            <person name="Rieger M."/>
            <person name="Weichselgartner M."/>
            <person name="de Simone V."/>
            <person name="Obermaier B."/>
            <person name="Mache R."/>
            <person name="Mueller M."/>
            <person name="Kreis M."/>
            <person name="Delseny M."/>
            <person name="Puigdomenech P."/>
            <person name="Watson M."/>
            <person name="Schmidtheini T."/>
            <person name="Reichert B."/>
            <person name="Portetelle D."/>
            <person name="Perez-Alonso M."/>
            <person name="Boutry M."/>
            <person name="Bancroft I."/>
            <person name="Vos P."/>
            <person name="Hoheisel J."/>
            <person name="Zimmermann W."/>
            <person name="Wedler H."/>
            <person name="Ridley P."/>
            <person name="Langham S.-A."/>
            <person name="McCullagh B."/>
            <person name="Bilham L."/>
            <person name="Robben J."/>
            <person name="van der Schueren J."/>
            <person name="Grymonprez B."/>
            <person name="Chuang Y.-J."/>
            <person name="Vandenbussche F."/>
            <person name="Braeken M."/>
            <person name="Weltjens I."/>
            <person name="Voet M."/>
            <person name="Bastiaens I."/>
            <person name="Aert R."/>
            <person name="Defoor E."/>
            <person name="Weitzenegger T."/>
            <person name="Bothe G."/>
            <person name="Ramsperger U."/>
            <person name="Hilbert H."/>
            <person name="Braun M."/>
            <person name="Holzer E."/>
            <person name="Brandt A."/>
            <person name="Peters S."/>
            <person name="van Staveren M."/>
            <person name="Dirkse W."/>
            <person name="Mooijman P."/>
            <person name="Klein Lankhorst R."/>
            <person name="Rose M."/>
            <person name="Hauf J."/>
            <person name="Koetter P."/>
            <person name="Berneiser S."/>
            <person name="Hempel S."/>
            <person name="Feldpausch M."/>
            <person name="Lamberth S."/>
            <person name="Van den Daele H."/>
            <person name="De Keyser A."/>
            <person name="Buysshaert C."/>
            <person name="Gielen J."/>
            <person name="Villarroel R."/>
            <person name="De Clercq R."/>
            <person name="van Montagu M."/>
            <person name="Rogers J."/>
            <person name="Cronin A."/>
            <person name="Quail M.A."/>
            <person name="Bray-Allen S."/>
            <person name="Clark L."/>
            <person name="Doggett J."/>
            <person name="Hall S."/>
            <person name="Kay M."/>
            <person name="Lennard N."/>
            <person name="McLay K."/>
            <person name="Mayes R."/>
            <person name="Pettett A."/>
            <person name="Rajandream M.A."/>
            <person name="Lyne M."/>
            <person name="Benes V."/>
            <person name="Rechmann S."/>
            <person name="Borkova D."/>
            <person name="Bloecker H."/>
            <person name="Scharfe M."/>
            <person name="Grimm M."/>
            <person name="Loehnert T.-H."/>
            <person name="Dose S."/>
            <person name="de Haan M."/>
            <person name="Maarse A.C."/>
            <person name="Schaefer M."/>
            <person name="Mueller-Auer S."/>
            <person name="Gabel C."/>
            <person name="Fuchs M."/>
            <person name="Fartmann B."/>
            <person name="Granderath K."/>
            <person name="Dauner D."/>
            <person name="Herzl A."/>
            <person name="Neumann S."/>
            <person name="Argiriou A."/>
            <person name="Vitale D."/>
            <person name="Liguori R."/>
            <person name="Piravandi E."/>
            <person name="Massenet O."/>
            <person name="Quigley F."/>
            <person name="Clabauld G."/>
            <person name="Muendlein A."/>
            <person name="Felber R."/>
            <person name="Schnabl S."/>
            <person name="Hiller R."/>
            <person name="Schmidt W."/>
            <person name="Lecharny A."/>
            <person name="Aubourg S."/>
            <person name="Chefdor F."/>
            <person name="Cooke R."/>
            <person name="Berger C."/>
            <person name="Monfort A."/>
            <person name="Casacuberta E."/>
            <person name="Gibbons T."/>
            <person name="Weber N."/>
            <person name="Vandenbol M."/>
            <person name="Bargues M."/>
            <person name="Terol J."/>
            <person name="Torres A."/>
            <person name="Perez-Perez A."/>
            <person name="Purnelle B."/>
            <person name="Bent E."/>
            <person name="Johnson S."/>
            <person name="Tacon D."/>
            <person name="Jesse T."/>
            <person name="Heijnen L."/>
            <person name="Schwarz S."/>
            <person name="Scholler P."/>
            <person name="Heber S."/>
            <person name="Francs P."/>
            <person name="Bielke C."/>
            <person name="Frishman D."/>
            <person name="Haase D."/>
            <person name="Lemcke K."/>
            <person name="Mewes H.-W."/>
            <person name="Stocker S."/>
            <person name="Zaccaria P."/>
            <person name="Bevan M."/>
            <person name="Wilson R.K."/>
            <person name="de la Bastide M."/>
            <person name="Habermann K."/>
            <person name="Parnell L."/>
            <person name="Dedhia N."/>
            <person name="Gnoj L."/>
            <person name="Schutz K."/>
            <person name="Huang E."/>
            <person name="Spiegel L."/>
            <person name="Sekhon M."/>
            <person name="Murray J."/>
            <person name="Sheet P."/>
            <person name="Cordes M."/>
            <person name="Abu-Threideh J."/>
            <person name="Stoneking T."/>
            <person name="Kalicki J."/>
            <person name="Graves T."/>
            <person name="Harmon G."/>
            <person name="Edwards J."/>
            <person name="Latreille P."/>
            <person name="Courtney L."/>
            <person name="Cloud J."/>
            <person name="Abbott A."/>
            <person name="Scott K."/>
            <person name="Johnson D."/>
            <person name="Minx P."/>
            <person name="Bentley D."/>
            <person name="Fulton B."/>
            <person name="Miller N."/>
            <person name="Greco T."/>
            <person name="Kemp K."/>
            <person name="Kramer J."/>
            <person name="Fulton L."/>
            <person name="Mardis E."/>
            <person name="Dante M."/>
            <person name="Pepin K."/>
            <person name="Hillier L.W."/>
            <person name="Nelson J."/>
            <person name="Spieth J."/>
            <person name="Ryan E."/>
            <person name="Andrews S."/>
            <person name="Geisel C."/>
            <person name="Layman D."/>
            <person name="Du H."/>
            <person name="Ali J."/>
            <person name="Berghoff A."/>
            <person name="Jones K."/>
            <person name="Drone K."/>
            <person name="Cotton M."/>
            <person name="Joshu C."/>
            <person name="Antonoiu B."/>
            <person name="Zidanic M."/>
            <person name="Strong C."/>
            <person name="Sun H."/>
            <person name="Lamar B."/>
            <person name="Yordan C."/>
            <person name="Ma P."/>
            <person name="Zhong J."/>
            <person name="Preston R."/>
            <person name="Vil D."/>
            <person name="Shekher M."/>
            <person name="Matero A."/>
            <person name="Shah R."/>
            <person name="Swaby I.K."/>
            <person name="O'Shaughnessy A."/>
            <person name="Rodriguez M."/>
            <person name="Hoffman J."/>
            <person name="Till S."/>
            <person name="Granat S."/>
            <person name="Shohdy N."/>
            <person name="Hasegawa A."/>
            <person name="Hameed A."/>
            <person name="Lodhi M."/>
            <person name="Johnson A."/>
            <person name="Chen E."/>
            <person name="Marra M.A."/>
            <person name="Martienssen R."/>
            <person name="McCombie W.R."/>
        </authorList>
    </citation>
    <scope>NUCLEOTIDE SEQUENCE [LARGE SCALE GENOMIC DNA]</scope>
    <source>
        <strain>cv. Columbia</strain>
    </source>
</reference>
<reference key="2">
    <citation type="journal article" date="2017" name="Plant J.">
        <title>Araport11: a complete reannotation of the Arabidopsis thaliana reference genome.</title>
        <authorList>
            <person name="Cheng C.Y."/>
            <person name="Krishnakumar V."/>
            <person name="Chan A.P."/>
            <person name="Thibaud-Nissen F."/>
            <person name="Schobel S."/>
            <person name="Town C.D."/>
        </authorList>
    </citation>
    <scope>GENOME REANNOTATION</scope>
    <scope>SEQUENCE REVISION</scope>
    <source>
        <strain>cv. Columbia</strain>
    </source>
</reference>
<reference key="3">
    <citation type="journal article" date="2003" name="Science">
        <title>Empirical analysis of transcriptional activity in the Arabidopsis genome.</title>
        <authorList>
            <person name="Yamada K."/>
            <person name="Lim J."/>
            <person name="Dale J.M."/>
            <person name="Chen H."/>
            <person name="Shinn P."/>
            <person name="Palm C.J."/>
            <person name="Southwick A.M."/>
            <person name="Wu H.C."/>
            <person name="Kim C.J."/>
            <person name="Nguyen M."/>
            <person name="Pham P.K."/>
            <person name="Cheuk R.F."/>
            <person name="Karlin-Newmann G."/>
            <person name="Liu S.X."/>
            <person name="Lam B."/>
            <person name="Sakano H."/>
            <person name="Wu T."/>
            <person name="Yu G."/>
            <person name="Miranda M."/>
            <person name="Quach H.L."/>
            <person name="Tripp M."/>
            <person name="Chang C.H."/>
            <person name="Lee J.M."/>
            <person name="Toriumi M.J."/>
            <person name="Chan M.M."/>
            <person name="Tang C.C."/>
            <person name="Onodera C.S."/>
            <person name="Deng J.M."/>
            <person name="Akiyama K."/>
            <person name="Ansari Y."/>
            <person name="Arakawa T."/>
            <person name="Banh J."/>
            <person name="Banno F."/>
            <person name="Bowser L."/>
            <person name="Brooks S.Y."/>
            <person name="Carninci P."/>
            <person name="Chao Q."/>
            <person name="Choy N."/>
            <person name="Enju A."/>
            <person name="Goldsmith A.D."/>
            <person name="Gurjal M."/>
            <person name="Hansen N.F."/>
            <person name="Hayashizaki Y."/>
            <person name="Johnson-Hopson C."/>
            <person name="Hsuan V.W."/>
            <person name="Iida K."/>
            <person name="Karnes M."/>
            <person name="Khan S."/>
            <person name="Koesema E."/>
            <person name="Ishida J."/>
            <person name="Jiang P.X."/>
            <person name="Jones T."/>
            <person name="Kawai J."/>
            <person name="Kamiya A."/>
            <person name="Meyers C."/>
            <person name="Nakajima M."/>
            <person name="Narusaka M."/>
            <person name="Seki M."/>
            <person name="Sakurai T."/>
            <person name="Satou M."/>
            <person name="Tamse R."/>
            <person name="Vaysberg M."/>
            <person name="Wallender E.K."/>
            <person name="Wong C."/>
            <person name="Yamamura Y."/>
            <person name="Yuan S."/>
            <person name="Shinozaki K."/>
            <person name="Davis R.W."/>
            <person name="Theologis A."/>
            <person name="Ecker J.R."/>
        </authorList>
    </citation>
    <scope>NUCLEOTIDE SEQUENCE [LARGE SCALE MRNA] (ISOFORM 2)</scope>
    <source>
        <strain>cv. Columbia</strain>
    </source>
</reference>
<reference key="4">
    <citation type="journal article" date="2009" name="DNA Res.">
        <title>Analysis of multiple occurrences of alternative splicing events in Arabidopsis thaliana using novel sequenced full-length cDNAs.</title>
        <authorList>
            <person name="Iida K."/>
            <person name="Fukami-Kobayashi K."/>
            <person name="Toyoda A."/>
            <person name="Sakaki Y."/>
            <person name="Kobayashi M."/>
            <person name="Seki M."/>
            <person name="Shinozaki K."/>
        </authorList>
    </citation>
    <scope>NUCLEOTIDE SEQUENCE [LARGE SCALE MRNA] (ISOFORM 1)</scope>
    <source>
        <strain>cv. Columbia</strain>
    </source>
</reference>
<reference key="5">
    <citation type="submission" date="2002-03" db="EMBL/GenBank/DDBJ databases">
        <title>Full-length cDNA from Arabidopsis thaliana.</title>
        <authorList>
            <person name="Brover V.V."/>
            <person name="Troukhan M.E."/>
            <person name="Alexandrov N.A."/>
            <person name="Lu Y.-P."/>
            <person name="Flavell R.B."/>
            <person name="Feldmann K.A."/>
        </authorList>
    </citation>
    <scope>NUCLEOTIDE SEQUENCE [LARGE SCALE MRNA] (ISOFORM 1)</scope>
</reference>
<reference key="6">
    <citation type="journal article" date="2002" name="J. Cell Sci.">
        <title>Genome-wide gene expression profiling in Arabidopsis thaliana reveals new targets of abscisic acid and largely impaired gene regulation in the abi1-1 mutant.</title>
        <authorList>
            <person name="Hoth S."/>
            <person name="Morgante M."/>
            <person name="Sanchez J.-P."/>
            <person name="Hanafey M.K."/>
            <person name="Tingey S.V."/>
            <person name="Chua N.-H."/>
        </authorList>
    </citation>
    <scope>INDUCTION BY ABSCISIC ACID</scope>
</reference>
<reference key="7">
    <citation type="journal article" date="2010" name="Mol. Plant Microbe Interact.">
        <title>A putative RNA-binding protein positively regulates salicylic acid-mediated immunity in Arabidopsis.</title>
        <authorList>
            <person name="Qi Y."/>
            <person name="Tsuda K."/>
            <person name="Joe A."/>
            <person name="Sato M."/>
            <person name="Nguyen L.V."/>
            <person name="Glazebrook J."/>
            <person name="Alfano J.R."/>
            <person name="Cohen J.D."/>
            <person name="Katagiri F."/>
        </authorList>
    </citation>
    <scope>FUNCTION</scope>
    <scope>SUBCELLULAR LOCATION</scope>
    <scope>DISRUPTION PHENOTYPE</scope>
</reference>
<reference key="8">
    <citation type="journal article" date="2013" name="New Phytol.">
        <title>Bruno-like proteins modulate flowering time via 3' UTR-dependent decay of SOC1 mRNA.</title>
        <authorList>
            <person name="Kim H.S."/>
            <person name="Abbasi N."/>
            <person name="Choi S.B."/>
        </authorList>
    </citation>
    <scope>FUNCTION</scope>
    <scope>SUBCELLULAR LOCATION</scope>
    <scope>TISSUE SPECIFICITY</scope>
</reference>
<comment type="function">
    <text evidence="4 5">RNA-binding protein involved in the regulation of flowering time. Acts as a repressor of the activity of SOC1, a transcriptional activator of flowering time. Binds to the 3'-UTR of SOC1 mRNA in the cytoplasm and participates in SOC1 mRNA decay, mediated by the distal region of the SOC1 3'-UTR (PubMed:23437850). Acts as a positive regulator of salicylic acid (SA)-mediated immunity. May act on SA signaling-related genes at a post-transcriptional level (PubMed:20636102).</text>
</comment>
<comment type="subcellular location">
    <subcellularLocation>
        <location evidence="4 5">Cytoplasm</location>
    </subcellularLocation>
</comment>
<comment type="alternative products">
    <event type="alternative splicing"/>
    <isoform>
        <id>Q8LFS6-1</id>
        <name>1</name>
        <sequence type="displayed"/>
    </isoform>
    <isoform>
        <id>Q8LFS6-2</id>
        <name>2</name>
        <sequence type="described" ref="VSP_057470"/>
    </isoform>
</comment>
<comment type="tissue specificity">
    <text evidence="5">Highly expressed in stems and cauline leaves, and at lower levels in siliques, flowers, roots and rosette leaves.</text>
</comment>
<comment type="induction">
    <text evidence="3">By abscisic acid (ABA).</text>
</comment>
<comment type="disruption phenotype">
    <text evidence="4">No visible phenotype under normal growth conditions, but mutant plants show enhanced susceptibility to the pathogen Pseudomonas syringae pv. tomato DC3000.</text>
</comment>
<comment type="sequence caution" evidence="8">
    <conflict type="erroneous gene model prediction">
        <sequence resource="EMBL-CDS" id="AAC79095"/>
    </conflict>
</comment>
<comment type="sequence caution" evidence="8">
    <conflict type="erroneous gene model prediction">
        <sequence resource="EMBL-CDS" id="AAD14439"/>
    </conflict>
</comment>
<comment type="sequence caution" evidence="8">
    <conflict type="erroneous gene model prediction">
        <sequence resource="EMBL-CDS" id="CAB77796"/>
    </conflict>
</comment>
<sequence length="441" mass="48199">MAEAKEENREKNEEEESVKLFVGQIPKHMSESQLLTLFQEFAVVDEVNIIKDKITRASRGCCFLLCPSREEADKLVNACHNKKTLPGANSLLQVKYADGELERLEHKLFVGMLPKNVSEAEVQSLFSKYGTIKDLQILRGAQQTSKGCAFLKYETKEQAVSAMESINGKHKMEGSTVPLVVKWADTERERHTRRLQKAQSHIARLGNGDPTNPSLFGALPMGYVPPYNGYGYHQPPGTYGYMLPPIQNQAAFSNMIAQPNQGNNNALQGTSPDSVPPRLARRNFPMPPGNYMGSGYPAMRGHPFPFAYPRGIVSPRPLSSSPGSISPGMSTPLGIGLSSVVQTEGPEGANLFIYNIPREFGDQELAAAFQSFGIVLSAKVFVDKATGVSKCFGFVSYDSQAAAQNAIDMMNGRHLGGKKLKVQLKRDSNNGQPSSNPSLIS</sequence>
<protein>
    <recommendedName>
        <fullName evidence="8">RNA-binding protein BRN1</fullName>
    </recommendedName>
    <alternativeName>
        <fullName evidence="7">Protein BRUNO-LIKE 1</fullName>
        <shortName evidence="7">AtBRN1</shortName>
    </alternativeName>
    <alternativeName>
        <fullName evidence="6">Protein RNA-BINDING PROTEIN-DEFENSE RELATED 1</fullName>
        <shortName evidence="6">AtRBP-DR1</shortName>
    </alternativeName>
</protein>
<accession>Q8LFS6</accession>
<accession>Q8VZ45</accession>
<accession>Q9ZNS7</accession>
<evidence type="ECO:0000255" key="1">
    <source>
        <dbReference type="PROSITE-ProRule" id="PRU00176"/>
    </source>
</evidence>
<evidence type="ECO:0000256" key="2">
    <source>
        <dbReference type="SAM" id="MobiDB-lite"/>
    </source>
</evidence>
<evidence type="ECO:0000269" key="3">
    <source>
    </source>
</evidence>
<evidence type="ECO:0000269" key="4">
    <source>
    </source>
</evidence>
<evidence type="ECO:0000269" key="5">
    <source>
    </source>
</evidence>
<evidence type="ECO:0000303" key="6">
    <source>
    </source>
</evidence>
<evidence type="ECO:0000303" key="7">
    <source>
    </source>
</evidence>
<evidence type="ECO:0000305" key="8"/>
<evidence type="ECO:0000312" key="9">
    <source>
        <dbReference type="Araport" id="AT4G03110"/>
    </source>
</evidence>
<evidence type="ECO:0000312" key="10">
    <source>
        <dbReference type="EMBL" id="AAC79095.1"/>
    </source>
</evidence>
<evidence type="ECO:0000312" key="11">
    <source>
        <dbReference type="EMBL" id="AAD14439.1"/>
    </source>
</evidence>
<dbReference type="EMBL" id="AC005275">
    <property type="protein sequence ID" value="AAD14439.1"/>
    <property type="status" value="ALT_SEQ"/>
    <property type="molecule type" value="Genomic_DNA"/>
</dbReference>
<dbReference type="EMBL" id="AF069442">
    <property type="protein sequence ID" value="AAC79095.1"/>
    <property type="status" value="ALT_SEQ"/>
    <property type="molecule type" value="Genomic_DNA"/>
</dbReference>
<dbReference type="EMBL" id="AL161496">
    <property type="protein sequence ID" value="CAB77796.1"/>
    <property type="status" value="ALT_SEQ"/>
    <property type="molecule type" value="Genomic_DNA"/>
</dbReference>
<dbReference type="EMBL" id="CP002687">
    <property type="protein sequence ID" value="AEE82272.1"/>
    <property type="molecule type" value="Genomic_DNA"/>
</dbReference>
<dbReference type="EMBL" id="CP002687">
    <property type="protein sequence ID" value="AEE82273.1"/>
    <property type="molecule type" value="Genomic_DNA"/>
</dbReference>
<dbReference type="EMBL" id="CP002687">
    <property type="protein sequence ID" value="ANM67473.1"/>
    <property type="molecule type" value="Genomic_DNA"/>
</dbReference>
<dbReference type="EMBL" id="AY065261">
    <property type="protein sequence ID" value="AAL38737.1"/>
    <property type="molecule type" value="mRNA"/>
</dbReference>
<dbReference type="EMBL" id="AK316961">
    <property type="protein sequence ID" value="BAH19660.1"/>
    <property type="molecule type" value="mRNA"/>
</dbReference>
<dbReference type="EMBL" id="AY084669">
    <property type="protein sequence ID" value="AAM61231.1"/>
    <property type="molecule type" value="mRNA"/>
</dbReference>
<dbReference type="PIR" id="T01382">
    <property type="entry name" value="T01382"/>
</dbReference>
<dbReference type="RefSeq" id="NP_001329301.1">
    <molecule id="Q8LFS6-2"/>
    <property type="nucleotide sequence ID" value="NM_001340422.1"/>
</dbReference>
<dbReference type="RefSeq" id="NP_567249.1">
    <molecule id="Q8LFS6-1"/>
    <property type="nucleotide sequence ID" value="NM_116545.4"/>
</dbReference>
<dbReference type="RefSeq" id="NP_849294.1">
    <property type="nucleotide sequence ID" value="NM_178963.3"/>
</dbReference>
<dbReference type="SMR" id="Q8LFS6"/>
<dbReference type="FunCoup" id="Q8LFS6">
    <property type="interactions" value="1005"/>
</dbReference>
<dbReference type="STRING" id="3702.Q8LFS6"/>
<dbReference type="PaxDb" id="3702-AT4G03110.1"/>
<dbReference type="ProteomicsDB" id="222819">
    <molecule id="Q8LFS6-1"/>
</dbReference>
<dbReference type="EnsemblPlants" id="AT4G03110.1">
    <molecule id="Q8LFS6-1"/>
    <property type="protein sequence ID" value="AT4G03110.1"/>
    <property type="gene ID" value="AT4G03110"/>
</dbReference>
<dbReference type="EnsemblPlants" id="AT4G03110.3">
    <molecule id="Q8LFS6-2"/>
    <property type="protein sequence ID" value="AT4G03110.3"/>
    <property type="gene ID" value="AT4G03110"/>
</dbReference>
<dbReference type="GeneID" id="828090"/>
<dbReference type="Gramene" id="AT4G03110.1">
    <molecule id="Q8LFS6-1"/>
    <property type="protein sequence ID" value="AT4G03110.1"/>
    <property type="gene ID" value="AT4G03110"/>
</dbReference>
<dbReference type="Gramene" id="AT4G03110.3">
    <molecule id="Q8LFS6-2"/>
    <property type="protein sequence ID" value="AT4G03110.3"/>
    <property type="gene ID" value="AT4G03110"/>
</dbReference>
<dbReference type="KEGG" id="ath:AT4G03110"/>
<dbReference type="Araport" id="AT4G03110"/>
<dbReference type="TAIR" id="AT4G03110">
    <property type="gene designation" value="RBP-DR1"/>
</dbReference>
<dbReference type="eggNOG" id="KOG0144">
    <property type="taxonomic scope" value="Eukaryota"/>
</dbReference>
<dbReference type="HOGENOM" id="CLU_015367_5_1_1"/>
<dbReference type="InParanoid" id="Q8LFS6"/>
<dbReference type="OMA" id="FPCHPAP"/>
<dbReference type="OrthoDB" id="410044at2759"/>
<dbReference type="PhylomeDB" id="Q8LFS6"/>
<dbReference type="PRO" id="PR:Q8LFS6"/>
<dbReference type="Proteomes" id="UP000006548">
    <property type="component" value="Chromosome 4"/>
</dbReference>
<dbReference type="ExpressionAtlas" id="Q8LFS6">
    <property type="expression patterns" value="baseline and differential"/>
</dbReference>
<dbReference type="GO" id="GO:0005737">
    <property type="term" value="C:cytoplasm"/>
    <property type="evidence" value="ECO:0000314"/>
    <property type="project" value="TAIR"/>
</dbReference>
<dbReference type="GO" id="GO:0005829">
    <property type="term" value="C:cytosol"/>
    <property type="evidence" value="ECO:0007005"/>
    <property type="project" value="TAIR"/>
</dbReference>
<dbReference type="GO" id="GO:1990904">
    <property type="term" value="C:ribonucleoprotein complex"/>
    <property type="evidence" value="ECO:0007669"/>
    <property type="project" value="UniProtKB-KW"/>
</dbReference>
<dbReference type="GO" id="GO:0003729">
    <property type="term" value="F:mRNA binding"/>
    <property type="evidence" value="ECO:0000314"/>
    <property type="project" value="UniProtKB"/>
</dbReference>
<dbReference type="GO" id="GO:0009908">
    <property type="term" value="P:flower development"/>
    <property type="evidence" value="ECO:0007669"/>
    <property type="project" value="UniProtKB-KW"/>
</dbReference>
<dbReference type="GO" id="GO:0006402">
    <property type="term" value="P:mRNA catabolic process"/>
    <property type="evidence" value="ECO:0000314"/>
    <property type="project" value="UniProtKB"/>
</dbReference>
<dbReference type="GO" id="GO:0009626">
    <property type="term" value="P:plant-type hypersensitive response"/>
    <property type="evidence" value="ECO:0000315"/>
    <property type="project" value="TAIR"/>
</dbReference>
<dbReference type="GO" id="GO:0080151">
    <property type="term" value="P:positive regulation of salicylic acid mediated signaling pathway"/>
    <property type="evidence" value="ECO:0000315"/>
    <property type="project" value="TAIR"/>
</dbReference>
<dbReference type="GO" id="GO:2000028">
    <property type="term" value="P:regulation of photoperiodism, flowering"/>
    <property type="evidence" value="ECO:0000315"/>
    <property type="project" value="UniProtKB"/>
</dbReference>
<dbReference type="CDD" id="cd12361">
    <property type="entry name" value="RRM1_2_CELF1-6_like"/>
    <property type="match status" value="2"/>
</dbReference>
<dbReference type="CDD" id="cd12362">
    <property type="entry name" value="RRM3_CELF1-6"/>
    <property type="match status" value="1"/>
</dbReference>
<dbReference type="FunFam" id="3.30.70.330:FF:000302">
    <property type="entry name" value="RNA-binding protein BRN1"/>
    <property type="match status" value="1"/>
</dbReference>
<dbReference type="FunFam" id="3.30.70.330:FF:000216">
    <property type="entry name" value="RNA-binding protein BRN1 isoform X1"/>
    <property type="match status" value="1"/>
</dbReference>
<dbReference type="FunFam" id="3.30.70.330:FF:000383">
    <property type="entry name" value="Sex lethal, isoform D"/>
    <property type="match status" value="1"/>
</dbReference>
<dbReference type="Gene3D" id="3.30.70.330">
    <property type="match status" value="3"/>
</dbReference>
<dbReference type="InterPro" id="IPR002343">
    <property type="entry name" value="Hud_Sxl_RNA"/>
</dbReference>
<dbReference type="InterPro" id="IPR012677">
    <property type="entry name" value="Nucleotide-bd_a/b_plait_sf"/>
</dbReference>
<dbReference type="InterPro" id="IPR035979">
    <property type="entry name" value="RBD_domain_sf"/>
</dbReference>
<dbReference type="InterPro" id="IPR000504">
    <property type="entry name" value="RRM_dom"/>
</dbReference>
<dbReference type="PANTHER" id="PTHR24012">
    <property type="entry name" value="RNA BINDING PROTEIN"/>
    <property type="match status" value="1"/>
</dbReference>
<dbReference type="Pfam" id="PF00076">
    <property type="entry name" value="RRM_1"/>
    <property type="match status" value="3"/>
</dbReference>
<dbReference type="PRINTS" id="PR00961">
    <property type="entry name" value="HUDSXLRNA"/>
</dbReference>
<dbReference type="SMART" id="SM00360">
    <property type="entry name" value="RRM"/>
    <property type="match status" value="3"/>
</dbReference>
<dbReference type="SUPFAM" id="SSF54928">
    <property type="entry name" value="RNA-binding domain, RBD"/>
    <property type="match status" value="2"/>
</dbReference>
<dbReference type="PROSITE" id="PS50102">
    <property type="entry name" value="RRM"/>
    <property type="match status" value="3"/>
</dbReference>
<keyword id="KW-0025">Alternative splicing</keyword>
<keyword id="KW-0963">Cytoplasm</keyword>
<keyword id="KW-0287">Flowering</keyword>
<keyword id="KW-0611">Plant defense</keyword>
<keyword id="KW-1185">Reference proteome</keyword>
<keyword id="KW-0677">Repeat</keyword>
<keyword id="KW-0687">Ribonucleoprotein</keyword>
<keyword id="KW-0694">RNA-binding</keyword>